<sequence length="415" mass="45183">MSFLKEFDKDIFDLCEKELERQSNHLEMIASENFTLPAVMEAMGSVFTNKYAEGYPAKRYYGGCEYADGVEQLAIDRACKLFGCNYANVQPHSGSQANAAVYAALLKAGDKLLGMDLSHGGHLTHGSKPSFSGQNYSSFTYGVELDGRMNYDKILEIAKAVQPKIIVCGASAYAREIDFKKFREIADAVGAIMFADIAHVAGLVVAGEHMSPFPHAHVVTTTTHKTLAGPRGGMIMTNDEDIAKKINSAIFPGIQGGPLVHVIAAKAVGFKYNLSAEWKDYAVQVKANAKILGEVLVKRGYDLVSGGTDNHLVLLSFLNRDFSGKDADIALGNAGITVNKNTVPGETRSPFVTSGIRIGSPALTSRGMKEREFEFIANKIADVLDDINNTKLQESVKKELKELAQKFVIYNQSTY</sequence>
<dbReference type="EC" id="2.1.2.1" evidence="1"/>
<dbReference type="EMBL" id="CP000153">
    <property type="protein sequence ID" value="ABB44552.1"/>
    <property type="molecule type" value="Genomic_DNA"/>
</dbReference>
<dbReference type="RefSeq" id="WP_011372904.1">
    <property type="nucleotide sequence ID" value="NC_007575.1"/>
</dbReference>
<dbReference type="SMR" id="Q30R29"/>
<dbReference type="STRING" id="326298.Suden_1274"/>
<dbReference type="KEGG" id="tdn:Suden_1274"/>
<dbReference type="eggNOG" id="COG0112">
    <property type="taxonomic scope" value="Bacteria"/>
</dbReference>
<dbReference type="HOGENOM" id="CLU_022477_2_1_7"/>
<dbReference type="OrthoDB" id="9803846at2"/>
<dbReference type="UniPathway" id="UPA00193"/>
<dbReference type="UniPathway" id="UPA00288">
    <property type="reaction ID" value="UER01023"/>
</dbReference>
<dbReference type="Proteomes" id="UP000002714">
    <property type="component" value="Chromosome"/>
</dbReference>
<dbReference type="GO" id="GO:0005829">
    <property type="term" value="C:cytosol"/>
    <property type="evidence" value="ECO:0007669"/>
    <property type="project" value="TreeGrafter"/>
</dbReference>
<dbReference type="GO" id="GO:0004372">
    <property type="term" value="F:glycine hydroxymethyltransferase activity"/>
    <property type="evidence" value="ECO:0007669"/>
    <property type="project" value="UniProtKB-UniRule"/>
</dbReference>
<dbReference type="GO" id="GO:0030170">
    <property type="term" value="F:pyridoxal phosphate binding"/>
    <property type="evidence" value="ECO:0007669"/>
    <property type="project" value="UniProtKB-UniRule"/>
</dbReference>
<dbReference type="GO" id="GO:0019264">
    <property type="term" value="P:glycine biosynthetic process from serine"/>
    <property type="evidence" value="ECO:0007669"/>
    <property type="project" value="UniProtKB-UniRule"/>
</dbReference>
<dbReference type="GO" id="GO:0035999">
    <property type="term" value="P:tetrahydrofolate interconversion"/>
    <property type="evidence" value="ECO:0007669"/>
    <property type="project" value="UniProtKB-UniRule"/>
</dbReference>
<dbReference type="CDD" id="cd00378">
    <property type="entry name" value="SHMT"/>
    <property type="match status" value="1"/>
</dbReference>
<dbReference type="FunFam" id="3.40.640.10:FF:000001">
    <property type="entry name" value="Serine hydroxymethyltransferase"/>
    <property type="match status" value="1"/>
</dbReference>
<dbReference type="Gene3D" id="3.90.1150.10">
    <property type="entry name" value="Aspartate Aminotransferase, domain 1"/>
    <property type="match status" value="1"/>
</dbReference>
<dbReference type="Gene3D" id="3.40.640.10">
    <property type="entry name" value="Type I PLP-dependent aspartate aminotransferase-like (Major domain)"/>
    <property type="match status" value="1"/>
</dbReference>
<dbReference type="HAMAP" id="MF_00051">
    <property type="entry name" value="SHMT"/>
    <property type="match status" value="1"/>
</dbReference>
<dbReference type="InterPro" id="IPR015424">
    <property type="entry name" value="PyrdxlP-dep_Trfase"/>
</dbReference>
<dbReference type="InterPro" id="IPR015421">
    <property type="entry name" value="PyrdxlP-dep_Trfase_major"/>
</dbReference>
<dbReference type="InterPro" id="IPR015422">
    <property type="entry name" value="PyrdxlP-dep_Trfase_small"/>
</dbReference>
<dbReference type="InterPro" id="IPR001085">
    <property type="entry name" value="Ser_HO-MeTrfase"/>
</dbReference>
<dbReference type="InterPro" id="IPR049943">
    <property type="entry name" value="Ser_HO-MeTrfase-like"/>
</dbReference>
<dbReference type="InterPro" id="IPR019798">
    <property type="entry name" value="Ser_HO-MeTrfase_PLP_BS"/>
</dbReference>
<dbReference type="InterPro" id="IPR039429">
    <property type="entry name" value="SHMT-like_dom"/>
</dbReference>
<dbReference type="NCBIfam" id="NF000586">
    <property type="entry name" value="PRK00011.1"/>
    <property type="match status" value="1"/>
</dbReference>
<dbReference type="PANTHER" id="PTHR11680">
    <property type="entry name" value="SERINE HYDROXYMETHYLTRANSFERASE"/>
    <property type="match status" value="1"/>
</dbReference>
<dbReference type="PANTHER" id="PTHR11680:SF50">
    <property type="entry name" value="SERINE HYDROXYMETHYLTRANSFERASE"/>
    <property type="match status" value="1"/>
</dbReference>
<dbReference type="Pfam" id="PF00464">
    <property type="entry name" value="SHMT"/>
    <property type="match status" value="1"/>
</dbReference>
<dbReference type="PIRSF" id="PIRSF000412">
    <property type="entry name" value="SHMT"/>
    <property type="match status" value="1"/>
</dbReference>
<dbReference type="SUPFAM" id="SSF53383">
    <property type="entry name" value="PLP-dependent transferases"/>
    <property type="match status" value="1"/>
</dbReference>
<dbReference type="PROSITE" id="PS00096">
    <property type="entry name" value="SHMT"/>
    <property type="match status" value="1"/>
</dbReference>
<name>GLYA1_SULDN</name>
<comment type="function">
    <text evidence="1">Catalyzes the reversible interconversion of serine and glycine with tetrahydrofolate (THF) serving as the one-carbon carrier. This reaction serves as the major source of one-carbon groups required for the biosynthesis of purines, thymidylate, methionine, and other important biomolecules. Also exhibits THF-independent aldolase activity toward beta-hydroxyamino acids, producing glycine and aldehydes, via a retro-aldol mechanism.</text>
</comment>
<comment type="catalytic activity">
    <reaction evidence="1">
        <text>(6R)-5,10-methylene-5,6,7,8-tetrahydrofolate + glycine + H2O = (6S)-5,6,7,8-tetrahydrofolate + L-serine</text>
        <dbReference type="Rhea" id="RHEA:15481"/>
        <dbReference type="ChEBI" id="CHEBI:15377"/>
        <dbReference type="ChEBI" id="CHEBI:15636"/>
        <dbReference type="ChEBI" id="CHEBI:33384"/>
        <dbReference type="ChEBI" id="CHEBI:57305"/>
        <dbReference type="ChEBI" id="CHEBI:57453"/>
        <dbReference type="EC" id="2.1.2.1"/>
    </reaction>
</comment>
<comment type="cofactor">
    <cofactor evidence="1">
        <name>pyridoxal 5'-phosphate</name>
        <dbReference type="ChEBI" id="CHEBI:597326"/>
    </cofactor>
</comment>
<comment type="pathway">
    <text evidence="1">One-carbon metabolism; tetrahydrofolate interconversion.</text>
</comment>
<comment type="pathway">
    <text evidence="1">Amino-acid biosynthesis; glycine biosynthesis; glycine from L-serine: step 1/1.</text>
</comment>
<comment type="subunit">
    <text evidence="1">Homodimer.</text>
</comment>
<comment type="subcellular location">
    <subcellularLocation>
        <location evidence="1">Cytoplasm</location>
    </subcellularLocation>
</comment>
<comment type="similarity">
    <text evidence="1">Belongs to the SHMT family.</text>
</comment>
<accession>Q30R29</accession>
<evidence type="ECO:0000255" key="1">
    <source>
        <dbReference type="HAMAP-Rule" id="MF_00051"/>
    </source>
</evidence>
<protein>
    <recommendedName>
        <fullName evidence="1">Serine hydroxymethyltransferase 1</fullName>
        <shortName evidence="1">SHMT 1</shortName>
        <shortName evidence="1">Serine methylase 1</shortName>
        <ecNumber evidence="1">2.1.2.1</ecNumber>
    </recommendedName>
</protein>
<feature type="chain" id="PRO_0000235045" description="Serine hydroxymethyltransferase 1">
    <location>
        <begin position="1"/>
        <end position="415"/>
    </location>
</feature>
<feature type="binding site" evidence="1">
    <location>
        <position position="117"/>
    </location>
    <ligand>
        <name>(6S)-5,6,7,8-tetrahydrofolate</name>
        <dbReference type="ChEBI" id="CHEBI:57453"/>
    </ligand>
</feature>
<feature type="binding site" evidence="1">
    <location>
        <begin position="121"/>
        <end position="123"/>
    </location>
    <ligand>
        <name>(6S)-5,6,7,8-tetrahydrofolate</name>
        <dbReference type="ChEBI" id="CHEBI:57453"/>
    </ligand>
</feature>
<feature type="binding site" evidence="1">
    <location>
        <begin position="349"/>
        <end position="351"/>
    </location>
    <ligand>
        <name>(6S)-5,6,7,8-tetrahydrofolate</name>
        <dbReference type="ChEBI" id="CHEBI:57453"/>
    </ligand>
</feature>
<feature type="site" description="Plays an important role in substrate specificity" evidence="1">
    <location>
        <position position="224"/>
    </location>
</feature>
<feature type="modified residue" description="N6-(pyridoxal phosphate)lysine" evidence="1">
    <location>
        <position position="225"/>
    </location>
</feature>
<proteinExistence type="inferred from homology"/>
<organism>
    <name type="scientific">Sulfurimonas denitrificans (strain ATCC 33889 / DSM 1251)</name>
    <name type="common">Thiomicrospira denitrificans (strain ATCC 33889 / DSM 1251)</name>
    <dbReference type="NCBI Taxonomy" id="326298"/>
    <lineage>
        <taxon>Bacteria</taxon>
        <taxon>Pseudomonadati</taxon>
        <taxon>Campylobacterota</taxon>
        <taxon>Epsilonproteobacteria</taxon>
        <taxon>Campylobacterales</taxon>
        <taxon>Sulfurimonadaceae</taxon>
        <taxon>Sulfurimonas</taxon>
    </lineage>
</organism>
<keyword id="KW-0028">Amino-acid biosynthesis</keyword>
<keyword id="KW-0963">Cytoplasm</keyword>
<keyword id="KW-0554">One-carbon metabolism</keyword>
<keyword id="KW-0663">Pyridoxal phosphate</keyword>
<keyword id="KW-1185">Reference proteome</keyword>
<keyword id="KW-0808">Transferase</keyword>
<reference key="1">
    <citation type="journal article" date="2008" name="Appl. Environ. Microbiol.">
        <title>Genome of the epsilonproteobacterial chemolithoautotroph Sulfurimonas denitrificans.</title>
        <authorList>
            <person name="Sievert S.M."/>
            <person name="Scott K.M."/>
            <person name="Klotz M.G."/>
            <person name="Chain P.S.G."/>
            <person name="Hauser L.J."/>
            <person name="Hemp J."/>
            <person name="Huegler M."/>
            <person name="Land M."/>
            <person name="Lapidus A."/>
            <person name="Larimer F.W."/>
            <person name="Lucas S."/>
            <person name="Malfatti S.A."/>
            <person name="Meyer F."/>
            <person name="Paulsen I.T."/>
            <person name="Ren Q."/>
            <person name="Simon J."/>
            <person name="Bailey K."/>
            <person name="Diaz E."/>
            <person name="Fitzpatrick K.A."/>
            <person name="Glover B."/>
            <person name="Gwatney N."/>
            <person name="Korajkic A."/>
            <person name="Long A."/>
            <person name="Mobberley J.M."/>
            <person name="Pantry S.N."/>
            <person name="Pazder G."/>
            <person name="Peterson S."/>
            <person name="Quintanilla J.D."/>
            <person name="Sprinkle R."/>
            <person name="Stephens J."/>
            <person name="Thomas P."/>
            <person name="Vaughn R."/>
            <person name="Weber M.J."/>
            <person name="Wooten L.L."/>
        </authorList>
    </citation>
    <scope>NUCLEOTIDE SEQUENCE [LARGE SCALE GENOMIC DNA]</scope>
    <source>
        <strain>ATCC 33889 / DSM 1251</strain>
    </source>
</reference>
<gene>
    <name evidence="1" type="primary">glyA1</name>
    <name type="ordered locus">Suden_1274</name>
</gene>